<sequence length="127" mass="13114">MAEITKADVISFIENMTVLELAELVKELEDKFGVSAAAPVAVAAAAAPAAAAEAAEEKTEFDVILKSAGANKIGVIKVVRALTGLGLKEAKDLVDGAPKPVKNGVSKEEAEEAKKQLVESGAEVEIK</sequence>
<evidence type="ECO:0000255" key="1">
    <source>
        <dbReference type="HAMAP-Rule" id="MF_00368"/>
    </source>
</evidence>
<evidence type="ECO:0000256" key="2">
    <source>
        <dbReference type="SAM" id="MobiDB-lite"/>
    </source>
</evidence>
<evidence type="ECO:0000305" key="3"/>
<feature type="chain" id="PRO_0000243428" description="Large ribosomal subunit protein bL12">
    <location>
        <begin position="1"/>
        <end position="127"/>
    </location>
</feature>
<feature type="region of interest" description="Disordered" evidence="2">
    <location>
        <begin position="98"/>
        <end position="127"/>
    </location>
</feature>
<feature type="compositionally biased region" description="Basic and acidic residues" evidence="2">
    <location>
        <begin position="105"/>
        <end position="117"/>
    </location>
</feature>
<keyword id="KW-1185">Reference proteome</keyword>
<keyword id="KW-0687">Ribonucleoprotein</keyword>
<keyword id="KW-0689">Ribosomal protein</keyword>
<name>RL7_GEOSL</name>
<accession>Q748Y5</accession>
<dbReference type="EMBL" id="AE017180">
    <property type="protein sequence ID" value="AAR36256.1"/>
    <property type="molecule type" value="Genomic_DNA"/>
</dbReference>
<dbReference type="RefSeq" id="NP_953906.1">
    <property type="nucleotide sequence ID" value="NC_002939.5"/>
</dbReference>
<dbReference type="RefSeq" id="WP_010943494.1">
    <property type="nucleotide sequence ID" value="NC_002939.5"/>
</dbReference>
<dbReference type="SMR" id="Q748Y5"/>
<dbReference type="FunCoup" id="Q748Y5">
    <property type="interactions" value="667"/>
</dbReference>
<dbReference type="STRING" id="243231.GSU2864"/>
<dbReference type="EnsemblBacteria" id="AAR36256">
    <property type="protein sequence ID" value="AAR36256"/>
    <property type="gene ID" value="GSU2864"/>
</dbReference>
<dbReference type="KEGG" id="gsu:GSU2864"/>
<dbReference type="PATRIC" id="fig|243231.5.peg.2892"/>
<dbReference type="eggNOG" id="COG0222">
    <property type="taxonomic scope" value="Bacteria"/>
</dbReference>
<dbReference type="HOGENOM" id="CLU_086499_3_0_7"/>
<dbReference type="InParanoid" id="Q748Y5"/>
<dbReference type="OrthoDB" id="9811748at2"/>
<dbReference type="Proteomes" id="UP000000577">
    <property type="component" value="Chromosome"/>
</dbReference>
<dbReference type="GO" id="GO:0022625">
    <property type="term" value="C:cytosolic large ribosomal subunit"/>
    <property type="evidence" value="ECO:0000318"/>
    <property type="project" value="GO_Central"/>
</dbReference>
<dbReference type="GO" id="GO:0003729">
    <property type="term" value="F:mRNA binding"/>
    <property type="evidence" value="ECO:0000318"/>
    <property type="project" value="GO_Central"/>
</dbReference>
<dbReference type="GO" id="GO:0003735">
    <property type="term" value="F:structural constituent of ribosome"/>
    <property type="evidence" value="ECO:0000318"/>
    <property type="project" value="GO_Central"/>
</dbReference>
<dbReference type="GO" id="GO:0006412">
    <property type="term" value="P:translation"/>
    <property type="evidence" value="ECO:0000318"/>
    <property type="project" value="GO_Central"/>
</dbReference>
<dbReference type="CDD" id="cd00387">
    <property type="entry name" value="Ribosomal_L7_L12"/>
    <property type="match status" value="1"/>
</dbReference>
<dbReference type="FunFam" id="1.20.5.710:FF:000005">
    <property type="entry name" value="50S ribosomal protein L7/L12"/>
    <property type="match status" value="1"/>
</dbReference>
<dbReference type="FunFam" id="3.30.1390.10:FF:000001">
    <property type="entry name" value="50S ribosomal protein L7/L12"/>
    <property type="match status" value="1"/>
</dbReference>
<dbReference type="Gene3D" id="3.30.1390.10">
    <property type="match status" value="1"/>
</dbReference>
<dbReference type="Gene3D" id="1.20.5.710">
    <property type="entry name" value="Single helix bin"/>
    <property type="match status" value="1"/>
</dbReference>
<dbReference type="HAMAP" id="MF_00368">
    <property type="entry name" value="Ribosomal_bL12"/>
    <property type="match status" value="1"/>
</dbReference>
<dbReference type="InterPro" id="IPR000206">
    <property type="entry name" value="Ribosomal_bL12"/>
</dbReference>
<dbReference type="InterPro" id="IPR013823">
    <property type="entry name" value="Ribosomal_bL12_C"/>
</dbReference>
<dbReference type="InterPro" id="IPR014719">
    <property type="entry name" value="Ribosomal_bL12_C/ClpS-like"/>
</dbReference>
<dbReference type="InterPro" id="IPR008932">
    <property type="entry name" value="Ribosomal_bL12_oligo"/>
</dbReference>
<dbReference type="InterPro" id="IPR036235">
    <property type="entry name" value="Ribosomal_bL12_oligo_N_sf"/>
</dbReference>
<dbReference type="NCBIfam" id="TIGR00855">
    <property type="entry name" value="L12"/>
    <property type="match status" value="1"/>
</dbReference>
<dbReference type="PANTHER" id="PTHR45987">
    <property type="entry name" value="39S RIBOSOMAL PROTEIN L12"/>
    <property type="match status" value="1"/>
</dbReference>
<dbReference type="PANTHER" id="PTHR45987:SF4">
    <property type="entry name" value="LARGE RIBOSOMAL SUBUNIT PROTEIN BL12M"/>
    <property type="match status" value="1"/>
</dbReference>
<dbReference type="Pfam" id="PF00542">
    <property type="entry name" value="Ribosomal_L12"/>
    <property type="match status" value="1"/>
</dbReference>
<dbReference type="Pfam" id="PF16320">
    <property type="entry name" value="Ribosomal_L12_N"/>
    <property type="match status" value="1"/>
</dbReference>
<dbReference type="SUPFAM" id="SSF54736">
    <property type="entry name" value="ClpS-like"/>
    <property type="match status" value="1"/>
</dbReference>
<dbReference type="SUPFAM" id="SSF48300">
    <property type="entry name" value="Ribosomal protein L7/12, oligomerisation (N-terminal) domain"/>
    <property type="match status" value="1"/>
</dbReference>
<protein>
    <recommendedName>
        <fullName evidence="1">Large ribosomal subunit protein bL12</fullName>
    </recommendedName>
    <alternativeName>
        <fullName evidence="3">50S ribosomal protein L7/L12</fullName>
    </alternativeName>
</protein>
<reference key="1">
    <citation type="journal article" date="2003" name="Science">
        <title>Genome of Geobacter sulfurreducens: metal reduction in subsurface environments.</title>
        <authorList>
            <person name="Methe B.A."/>
            <person name="Nelson K.E."/>
            <person name="Eisen J.A."/>
            <person name="Paulsen I.T."/>
            <person name="Nelson W.C."/>
            <person name="Heidelberg J.F."/>
            <person name="Wu D."/>
            <person name="Wu M."/>
            <person name="Ward N.L."/>
            <person name="Beanan M.J."/>
            <person name="Dodson R.J."/>
            <person name="Madupu R."/>
            <person name="Brinkac L.M."/>
            <person name="Daugherty S.C."/>
            <person name="DeBoy R.T."/>
            <person name="Durkin A.S."/>
            <person name="Gwinn M.L."/>
            <person name="Kolonay J.F."/>
            <person name="Sullivan S.A."/>
            <person name="Haft D.H."/>
            <person name="Selengut J."/>
            <person name="Davidsen T.M."/>
            <person name="Zafar N."/>
            <person name="White O."/>
            <person name="Tran B."/>
            <person name="Romero C."/>
            <person name="Forberger H.A."/>
            <person name="Weidman J.F."/>
            <person name="Khouri H.M."/>
            <person name="Feldblyum T.V."/>
            <person name="Utterback T.R."/>
            <person name="Van Aken S.E."/>
            <person name="Lovley D.R."/>
            <person name="Fraser C.M."/>
        </authorList>
    </citation>
    <scope>NUCLEOTIDE SEQUENCE [LARGE SCALE GENOMIC DNA]</scope>
    <source>
        <strain>ATCC 51573 / DSM 12127 / PCA</strain>
    </source>
</reference>
<proteinExistence type="inferred from homology"/>
<comment type="function">
    <text evidence="1">Forms part of the ribosomal stalk which helps the ribosome interact with GTP-bound translation factors. Is thus essential for accurate translation.</text>
</comment>
<comment type="subunit">
    <text evidence="1">Homodimer. Part of the ribosomal stalk of the 50S ribosomal subunit. Forms a multimeric L10(L12)X complex, where L10 forms an elongated spine to which 2 to 4 L12 dimers bind in a sequential fashion. Binds GTP-bound translation factors.</text>
</comment>
<comment type="similarity">
    <text evidence="1">Belongs to the bacterial ribosomal protein bL12 family.</text>
</comment>
<gene>
    <name evidence="1" type="primary">rplL</name>
    <name type="ordered locus">GSU2864</name>
</gene>
<organism>
    <name type="scientific">Geobacter sulfurreducens (strain ATCC 51573 / DSM 12127 / PCA)</name>
    <dbReference type="NCBI Taxonomy" id="243231"/>
    <lineage>
        <taxon>Bacteria</taxon>
        <taxon>Pseudomonadati</taxon>
        <taxon>Thermodesulfobacteriota</taxon>
        <taxon>Desulfuromonadia</taxon>
        <taxon>Geobacterales</taxon>
        <taxon>Geobacteraceae</taxon>
        <taxon>Geobacter</taxon>
    </lineage>
</organism>